<organism>
    <name type="scientific">Thermoplasma volcanium (strain ATCC 51530 / DSM 4299 / JCM 9571 / NBRC 15438 / GSS1)</name>
    <dbReference type="NCBI Taxonomy" id="273116"/>
    <lineage>
        <taxon>Archaea</taxon>
        <taxon>Methanobacteriati</taxon>
        <taxon>Thermoplasmatota</taxon>
        <taxon>Thermoplasmata</taxon>
        <taxon>Thermoplasmatales</taxon>
        <taxon>Thermoplasmataceae</taxon>
        <taxon>Thermoplasma</taxon>
    </lineage>
</organism>
<sequence>MIEKRKEEHIRIAENENVSAFHNYWDDVYLMHEADPEVNYDDIDTGVDFLGKHLGFPMVISSMTGGAEIAKKINYNLATVAEKYQLAMGVGSMRAAIVNRSLSDTYSVINERNVPIKIANIGAPQLVPQGKEAIDEKDIAYIYDLIKADFLAVHFNFLQEMVQPEGDRNAEGVIKRIKELSGSFNIIAKETGSGFSKATAQRLADAGVKAIEVSGLSGTTFAAVEYYRAKNEGNAEKMRIGETFWNWGIPSPASVYYCSDVLPVIGSGGLRNGLDLAKAISLGASLGGFARTLLKDADQSVEAVSRNVEMIEREFKVAMFLTGNKNVYELRKTKKVIGEPLKEWMEV</sequence>
<reference key="1">
    <citation type="journal article" date="2000" name="Proc. Natl. Acad. Sci. U.S.A.">
        <title>Archaeal adaptation to higher temperatures revealed by genomic sequence of Thermoplasma volcanium.</title>
        <authorList>
            <person name="Kawashima T."/>
            <person name="Amano N."/>
            <person name="Koike H."/>
            <person name="Makino S."/>
            <person name="Higuchi S."/>
            <person name="Kawashima-Ohya Y."/>
            <person name="Watanabe K."/>
            <person name="Yamazaki M."/>
            <person name="Kanehori K."/>
            <person name="Kawamoto T."/>
            <person name="Nunoshiba T."/>
            <person name="Yamamoto Y."/>
            <person name="Aramaki H."/>
            <person name="Makino K."/>
            <person name="Suzuki M."/>
        </authorList>
    </citation>
    <scope>NUCLEOTIDE SEQUENCE [LARGE SCALE GENOMIC DNA]</scope>
    <source>
        <strain>ATCC 51530 / DSM 4299 / JCM 9571 / NBRC 15438 / GSS1</strain>
    </source>
</reference>
<comment type="function">
    <text evidence="1">Involved in the biosynthesis of isoprenoids. Catalyzes the 1,3-allylic rearrangement of the homoallylic substrate isopentenyl (IPP) to its allylic isomer, dimethylallyl diphosphate (DMAPP).</text>
</comment>
<comment type="catalytic activity">
    <reaction evidence="1">
        <text>isopentenyl diphosphate = dimethylallyl diphosphate</text>
        <dbReference type="Rhea" id="RHEA:23284"/>
        <dbReference type="ChEBI" id="CHEBI:57623"/>
        <dbReference type="ChEBI" id="CHEBI:128769"/>
        <dbReference type="EC" id="5.3.3.2"/>
    </reaction>
</comment>
<comment type="cofactor">
    <cofactor evidence="1">
        <name>FMN</name>
        <dbReference type="ChEBI" id="CHEBI:58210"/>
    </cofactor>
</comment>
<comment type="cofactor">
    <cofactor evidence="1">
        <name>NADPH</name>
        <dbReference type="ChEBI" id="CHEBI:57783"/>
    </cofactor>
</comment>
<comment type="cofactor">
    <cofactor evidence="1">
        <name>Mg(2+)</name>
        <dbReference type="ChEBI" id="CHEBI:18420"/>
    </cofactor>
</comment>
<comment type="subunit">
    <text evidence="1">Homooctamer. Dimer of tetramers.</text>
</comment>
<comment type="subcellular location">
    <subcellularLocation>
        <location evidence="1">Cytoplasm</location>
    </subcellularLocation>
</comment>
<comment type="similarity">
    <text evidence="1">Belongs to the IPP isomerase type 2 family.</text>
</comment>
<protein>
    <recommendedName>
        <fullName evidence="1">Isopentenyl-diphosphate delta-isomerase</fullName>
        <shortName evidence="1">IPP isomerase</shortName>
        <ecNumber evidence="1">5.3.3.2</ecNumber>
    </recommendedName>
    <alternativeName>
        <fullName evidence="1">Isopentenyl diphosphate:dimethylallyl diphosphate isomerase</fullName>
    </alternativeName>
    <alternativeName>
        <fullName evidence="1">Isopentenyl pyrophosphate isomerase</fullName>
    </alternativeName>
    <alternativeName>
        <fullName evidence="1">Type 2 isopentenyl diphosphate isomerase</fullName>
        <shortName evidence="1">IDI-2</shortName>
    </alternativeName>
</protein>
<dbReference type="EC" id="5.3.3.2" evidence="1"/>
<dbReference type="EMBL" id="BA000011">
    <property type="protein sequence ID" value="BAB59322.1"/>
    <property type="molecule type" value="Genomic_DNA"/>
</dbReference>
<dbReference type="RefSeq" id="WP_010916435.1">
    <property type="nucleotide sequence ID" value="NC_002689.2"/>
</dbReference>
<dbReference type="SMR" id="Q97CC2"/>
<dbReference type="STRING" id="273116.gene:9380950"/>
<dbReference type="PaxDb" id="273116-14324394"/>
<dbReference type="GeneID" id="1441665"/>
<dbReference type="KEGG" id="tvo:TVG0186390"/>
<dbReference type="eggNOG" id="arCOG00613">
    <property type="taxonomic scope" value="Archaea"/>
</dbReference>
<dbReference type="HOGENOM" id="CLU_065515_1_0_2"/>
<dbReference type="OrthoDB" id="371955at2157"/>
<dbReference type="PhylomeDB" id="Q97CC2"/>
<dbReference type="Proteomes" id="UP000001017">
    <property type="component" value="Chromosome"/>
</dbReference>
<dbReference type="GO" id="GO:0005737">
    <property type="term" value="C:cytoplasm"/>
    <property type="evidence" value="ECO:0007669"/>
    <property type="project" value="UniProtKB-SubCell"/>
</dbReference>
<dbReference type="GO" id="GO:0010181">
    <property type="term" value="F:FMN binding"/>
    <property type="evidence" value="ECO:0007669"/>
    <property type="project" value="UniProtKB-UniRule"/>
</dbReference>
<dbReference type="GO" id="GO:0004452">
    <property type="term" value="F:isopentenyl-diphosphate delta-isomerase activity"/>
    <property type="evidence" value="ECO:0007669"/>
    <property type="project" value="UniProtKB-UniRule"/>
</dbReference>
<dbReference type="GO" id="GO:0000287">
    <property type="term" value="F:magnesium ion binding"/>
    <property type="evidence" value="ECO:0007669"/>
    <property type="project" value="UniProtKB-UniRule"/>
</dbReference>
<dbReference type="GO" id="GO:0070402">
    <property type="term" value="F:NADPH binding"/>
    <property type="evidence" value="ECO:0007669"/>
    <property type="project" value="UniProtKB-UniRule"/>
</dbReference>
<dbReference type="GO" id="GO:0016491">
    <property type="term" value="F:oxidoreductase activity"/>
    <property type="evidence" value="ECO:0007669"/>
    <property type="project" value="InterPro"/>
</dbReference>
<dbReference type="GO" id="GO:0008299">
    <property type="term" value="P:isoprenoid biosynthetic process"/>
    <property type="evidence" value="ECO:0007669"/>
    <property type="project" value="UniProtKB-UniRule"/>
</dbReference>
<dbReference type="CDD" id="cd02811">
    <property type="entry name" value="IDI-2_FMN"/>
    <property type="match status" value="1"/>
</dbReference>
<dbReference type="Gene3D" id="3.20.20.70">
    <property type="entry name" value="Aldolase class I"/>
    <property type="match status" value="1"/>
</dbReference>
<dbReference type="HAMAP" id="MF_00354">
    <property type="entry name" value="Idi_2"/>
    <property type="match status" value="1"/>
</dbReference>
<dbReference type="InterPro" id="IPR013785">
    <property type="entry name" value="Aldolase_TIM"/>
</dbReference>
<dbReference type="InterPro" id="IPR000262">
    <property type="entry name" value="FMN-dep_DH"/>
</dbReference>
<dbReference type="InterPro" id="IPR011179">
    <property type="entry name" value="IPdP_isomerase"/>
</dbReference>
<dbReference type="NCBIfam" id="TIGR02151">
    <property type="entry name" value="IPP_isom_2"/>
    <property type="match status" value="1"/>
</dbReference>
<dbReference type="PANTHER" id="PTHR43665">
    <property type="entry name" value="ISOPENTENYL-DIPHOSPHATE DELTA-ISOMERASE"/>
    <property type="match status" value="1"/>
</dbReference>
<dbReference type="PANTHER" id="PTHR43665:SF1">
    <property type="entry name" value="ISOPENTENYL-DIPHOSPHATE DELTA-ISOMERASE"/>
    <property type="match status" value="1"/>
</dbReference>
<dbReference type="Pfam" id="PF01070">
    <property type="entry name" value="FMN_dh"/>
    <property type="match status" value="1"/>
</dbReference>
<dbReference type="PIRSF" id="PIRSF003314">
    <property type="entry name" value="IPP_isomerase"/>
    <property type="match status" value="1"/>
</dbReference>
<dbReference type="SUPFAM" id="SSF51395">
    <property type="entry name" value="FMN-linked oxidoreductases"/>
    <property type="match status" value="1"/>
</dbReference>
<gene>
    <name evidence="1" type="primary">fni</name>
    <name type="ordered locus">TV0180</name>
    <name type="ORF">TVG0186390</name>
</gene>
<feature type="chain" id="PRO_0000134458" description="Isopentenyl-diphosphate delta-isomerase">
    <location>
        <begin position="1"/>
        <end position="347"/>
    </location>
</feature>
<feature type="binding site" evidence="1">
    <location>
        <begin position="5"/>
        <end position="6"/>
    </location>
    <ligand>
        <name>substrate</name>
    </ligand>
</feature>
<feature type="binding site" evidence="1">
    <location>
        <position position="61"/>
    </location>
    <ligand>
        <name>FMN</name>
        <dbReference type="ChEBI" id="CHEBI:58210"/>
    </ligand>
</feature>
<feature type="binding site" evidence="1">
    <location>
        <begin position="62"/>
        <end position="64"/>
    </location>
    <ligand>
        <name>FMN</name>
        <dbReference type="ChEBI" id="CHEBI:58210"/>
    </ligand>
</feature>
<feature type="binding site" evidence="1">
    <location>
        <begin position="92"/>
        <end position="94"/>
    </location>
    <ligand>
        <name>substrate</name>
    </ligand>
</feature>
<feature type="binding site" evidence="1">
    <location>
        <position position="92"/>
    </location>
    <ligand>
        <name>FMN</name>
        <dbReference type="ChEBI" id="CHEBI:58210"/>
    </ligand>
</feature>
<feature type="binding site" evidence="1">
    <location>
        <position position="120"/>
    </location>
    <ligand>
        <name>FMN</name>
        <dbReference type="ChEBI" id="CHEBI:58210"/>
    </ligand>
</feature>
<feature type="binding site" evidence="1">
    <location>
        <position position="159"/>
    </location>
    <ligand>
        <name>substrate</name>
    </ligand>
</feature>
<feature type="binding site" evidence="1">
    <location>
        <position position="160"/>
    </location>
    <ligand>
        <name>Mg(2+)</name>
        <dbReference type="ChEBI" id="CHEBI:18420"/>
    </ligand>
</feature>
<feature type="binding site" evidence="1">
    <location>
        <position position="189"/>
    </location>
    <ligand>
        <name>FMN</name>
        <dbReference type="ChEBI" id="CHEBI:58210"/>
    </ligand>
</feature>
<feature type="binding site" evidence="1">
    <location>
        <position position="214"/>
    </location>
    <ligand>
        <name>FMN</name>
        <dbReference type="ChEBI" id="CHEBI:58210"/>
    </ligand>
</feature>
<feature type="binding site" evidence="1">
    <location>
        <position position="219"/>
    </location>
    <ligand>
        <name>FMN</name>
        <dbReference type="ChEBI" id="CHEBI:58210"/>
    </ligand>
</feature>
<feature type="binding site" evidence="1">
    <location>
        <begin position="269"/>
        <end position="271"/>
    </location>
    <ligand>
        <name>FMN</name>
        <dbReference type="ChEBI" id="CHEBI:58210"/>
    </ligand>
</feature>
<feature type="binding site" evidence="1">
    <location>
        <begin position="290"/>
        <end position="291"/>
    </location>
    <ligand>
        <name>FMN</name>
        <dbReference type="ChEBI" id="CHEBI:58210"/>
    </ligand>
</feature>
<name>IDI2_THEVO</name>
<evidence type="ECO:0000255" key="1">
    <source>
        <dbReference type="HAMAP-Rule" id="MF_00354"/>
    </source>
</evidence>
<accession>Q97CC2</accession>
<keyword id="KW-0963">Cytoplasm</keyword>
<keyword id="KW-0285">Flavoprotein</keyword>
<keyword id="KW-0288">FMN</keyword>
<keyword id="KW-0413">Isomerase</keyword>
<keyword id="KW-0414">Isoprene biosynthesis</keyword>
<keyword id="KW-0460">Magnesium</keyword>
<keyword id="KW-0479">Metal-binding</keyword>
<keyword id="KW-0521">NADP</keyword>
<proteinExistence type="inferred from homology"/>